<evidence type="ECO:0000250" key="1"/>
<evidence type="ECO:0000255" key="2"/>
<evidence type="ECO:0000255" key="3">
    <source>
        <dbReference type="PROSITE-ProRule" id="PRU00042"/>
    </source>
</evidence>
<evidence type="ECO:0000256" key="4">
    <source>
        <dbReference type="SAM" id="MobiDB-lite"/>
    </source>
</evidence>
<evidence type="ECO:0000305" key="5"/>
<comment type="function">
    <text evidence="1">Transcription factor that mediates regulation of both acid- and alkaline-expressed genes in response to ambient pH. At alkaline ambient pH, activates transcription of alkaline-expressed genes (including palB/RIM101 itself) and represses transcription of acid-expressed genes (By similarity).</text>
</comment>
<comment type="subunit">
    <text evidence="1">Binds to DNA. Interacts with RIM20, which binds to the two YPX[LI] motifs and is required for proteolytic processing (By similarity).</text>
</comment>
<comment type="subcellular location">
    <subcellularLocation>
        <location evidence="1">Cytoplasm</location>
    </subcellularLocation>
    <subcellularLocation>
        <location evidence="1">Nucleus</location>
    </subcellularLocation>
</comment>
<comment type="PTM">
    <text evidence="1">Activated by C-terminal proteolytic cleavage by signaling protease (probably RIM13) at neutral to alkaline ambient pH.</text>
</comment>
<comment type="similarity">
    <text evidence="5">Belongs to the pacC/RIM101 family.</text>
</comment>
<feature type="chain" id="PRO_0000046818" description="pH-response transcription factor pacC/RIM101">
    <location>
        <begin position="1"/>
        <end position="432"/>
    </location>
</feature>
<feature type="zinc finger region" description="C2H2-type 1" evidence="3">
    <location>
        <begin position="70"/>
        <end position="95"/>
    </location>
</feature>
<feature type="zinc finger region" description="C2H2-type 2" evidence="3">
    <location>
        <begin position="106"/>
        <end position="130"/>
    </location>
</feature>
<feature type="zinc finger region" description="C2H2-type 3" evidence="3">
    <location>
        <begin position="136"/>
        <end position="158"/>
    </location>
</feature>
<feature type="region of interest" description="Disordered" evidence="4">
    <location>
        <begin position="22"/>
        <end position="64"/>
    </location>
</feature>
<feature type="region of interest" description="Disordered" evidence="4">
    <location>
        <begin position="163"/>
        <end position="186"/>
    </location>
</feature>
<feature type="short sequence motif" description="YPX[LI] motif 1" evidence="2">
    <location>
        <begin position="296"/>
        <end position="299"/>
    </location>
</feature>
<feature type="short sequence motif" description="YPX[LI] motif 2">
    <location>
        <begin position="427"/>
        <end position="430"/>
    </location>
</feature>
<feature type="compositionally biased region" description="Polar residues" evidence="4">
    <location>
        <begin position="46"/>
        <end position="61"/>
    </location>
</feature>
<organism>
    <name type="scientific">Eremothecium gossypii (strain ATCC 10895 / CBS 109.51 / FGSC 9923 / NRRL Y-1056)</name>
    <name type="common">Yeast</name>
    <name type="synonym">Ashbya gossypii</name>
    <dbReference type="NCBI Taxonomy" id="284811"/>
    <lineage>
        <taxon>Eukaryota</taxon>
        <taxon>Fungi</taxon>
        <taxon>Dikarya</taxon>
        <taxon>Ascomycota</taxon>
        <taxon>Saccharomycotina</taxon>
        <taxon>Saccharomycetes</taxon>
        <taxon>Saccharomycetales</taxon>
        <taxon>Saccharomycetaceae</taxon>
        <taxon>Eremothecium</taxon>
    </lineage>
</organism>
<proteinExistence type="inferred from homology"/>
<keyword id="KW-0010">Activator</keyword>
<keyword id="KW-0963">Cytoplasm</keyword>
<keyword id="KW-0238">DNA-binding</keyword>
<keyword id="KW-0479">Metal-binding</keyword>
<keyword id="KW-0539">Nucleus</keyword>
<keyword id="KW-1185">Reference proteome</keyword>
<keyword id="KW-0677">Repeat</keyword>
<keyword id="KW-0678">Repressor</keyword>
<keyword id="KW-0804">Transcription</keyword>
<keyword id="KW-0805">Transcription regulation</keyword>
<keyword id="KW-0862">Zinc</keyword>
<keyword id="KW-0863">Zinc-finger</keyword>
<name>PACC_EREGS</name>
<reference key="1">
    <citation type="journal article" date="2004" name="Science">
        <title>The Ashbya gossypii genome as a tool for mapping the ancient Saccharomyces cerevisiae genome.</title>
        <authorList>
            <person name="Dietrich F.S."/>
            <person name="Voegeli S."/>
            <person name="Brachat S."/>
            <person name="Lerch A."/>
            <person name="Gates K."/>
            <person name="Steiner S."/>
            <person name="Mohr C."/>
            <person name="Poehlmann R."/>
            <person name="Luedi P."/>
            <person name="Choi S."/>
            <person name="Wing R.A."/>
            <person name="Flavier A."/>
            <person name="Gaffney T.D."/>
            <person name="Philippsen P."/>
        </authorList>
    </citation>
    <scope>NUCLEOTIDE SEQUENCE [LARGE SCALE GENOMIC DNA]</scope>
    <source>
        <strain>ATCC 10895 / CBS 109.51 / FGSC 9923 / NRRL Y-1056</strain>
    </source>
</reference>
<reference key="2">
    <citation type="journal article" date="2013" name="G3 (Bethesda)">
        <title>Genomes of Ashbya fungi isolated from insects reveal four mating-type loci, numerous translocations, lack of transposons, and distinct gene duplications.</title>
        <authorList>
            <person name="Dietrich F.S."/>
            <person name="Voegeli S."/>
            <person name="Kuo S."/>
            <person name="Philippsen P."/>
        </authorList>
    </citation>
    <scope>GENOME REANNOTATION</scope>
    <source>
        <strain>ATCC 10895 / CBS 109.51 / FGSC 9923 / NRRL Y-1056</strain>
    </source>
</reference>
<accession>Q753Y2</accession>
<protein>
    <recommendedName>
        <fullName>pH-response transcription factor pacC/RIM101</fullName>
    </recommendedName>
</protein>
<gene>
    <name type="primary">RIM101</name>
    <name type="ordered locus">AFR190C</name>
</gene>
<sequence>MSHINHLLNSDEAIPSTALRSCAQRSPMSSDDELVGTAGYRENQPVPGSTLPTSPSDVSTDTENDEHQRLLCQWDACGSEFSQPELLYHHLCQDHVGRKSQRNLQLNCHWGSCTTKTVKRDHITSHLRVHVPLKPFSCSTCSRKFKRPQDLKKHLKVHMEDTMKERSRAAPGSRGVRKTGVNKGSALQEKARTLPNLTVESFVSQEMQNYYPYYKSRQHLDETLSHIILPPPAALGGTLASEPPSYTRKAVSFFTTLSQDMSRRLPSLAPCNSPGPAGKMVMLPRPEQQYARVPRYPAMPELPPLVTSPGAESHALPRGHNFRPAPLIPGSMLPSLSRFSHDKSQFVARNSYSLNQKASLNEELCENELDIALENLALDDTDALRAELQTVNIIKDYLTCLLLEDVYTESFELPASVEKSHSTLRKYPQIKV</sequence>
<dbReference type="EMBL" id="AE016819">
    <property type="protein sequence ID" value="AAS53561.1"/>
    <property type="molecule type" value="Genomic_DNA"/>
</dbReference>
<dbReference type="RefSeq" id="NP_985737.1">
    <property type="nucleotide sequence ID" value="NM_211091.1"/>
</dbReference>
<dbReference type="FunCoup" id="Q753Y2">
    <property type="interactions" value="1457"/>
</dbReference>
<dbReference type="STRING" id="284811.Q753Y2"/>
<dbReference type="EnsemblFungi" id="AAS53561">
    <property type="protein sequence ID" value="AAS53561"/>
    <property type="gene ID" value="AGOS_AFR190C"/>
</dbReference>
<dbReference type="GeneID" id="4621995"/>
<dbReference type="KEGG" id="ago:AGOS_AFR190C"/>
<dbReference type="eggNOG" id="KOG1721">
    <property type="taxonomic scope" value="Eukaryota"/>
</dbReference>
<dbReference type="HOGENOM" id="CLU_029652_0_0_1"/>
<dbReference type="InParanoid" id="Q753Y2"/>
<dbReference type="OMA" id="NCHWGSC"/>
<dbReference type="OrthoDB" id="6155966at2759"/>
<dbReference type="Proteomes" id="UP000000591">
    <property type="component" value="Chromosome VI"/>
</dbReference>
<dbReference type="GO" id="GO:0005737">
    <property type="term" value="C:cytoplasm"/>
    <property type="evidence" value="ECO:0007669"/>
    <property type="project" value="UniProtKB-SubCell"/>
</dbReference>
<dbReference type="GO" id="GO:0005634">
    <property type="term" value="C:nucleus"/>
    <property type="evidence" value="ECO:0000318"/>
    <property type="project" value="GO_Central"/>
</dbReference>
<dbReference type="GO" id="GO:0003677">
    <property type="term" value="F:DNA binding"/>
    <property type="evidence" value="ECO:0007669"/>
    <property type="project" value="UniProtKB-KW"/>
</dbReference>
<dbReference type="GO" id="GO:0008270">
    <property type="term" value="F:zinc ion binding"/>
    <property type="evidence" value="ECO:0007669"/>
    <property type="project" value="UniProtKB-KW"/>
</dbReference>
<dbReference type="GO" id="GO:0045944">
    <property type="term" value="P:positive regulation of transcription by RNA polymerase II"/>
    <property type="evidence" value="ECO:0000318"/>
    <property type="project" value="GO_Central"/>
</dbReference>
<dbReference type="FunFam" id="3.30.160.60:FF:000100">
    <property type="entry name" value="Zinc finger 45-like"/>
    <property type="match status" value="1"/>
</dbReference>
<dbReference type="Gene3D" id="3.30.160.60">
    <property type="entry name" value="Classic Zinc Finger"/>
    <property type="match status" value="2"/>
</dbReference>
<dbReference type="InterPro" id="IPR050806">
    <property type="entry name" value="pacC/RIM101"/>
</dbReference>
<dbReference type="InterPro" id="IPR036236">
    <property type="entry name" value="Znf_C2H2_sf"/>
</dbReference>
<dbReference type="InterPro" id="IPR013087">
    <property type="entry name" value="Znf_C2H2_type"/>
</dbReference>
<dbReference type="PANTHER" id="PTHR47257">
    <property type="entry name" value="PH-RESPONSE TRANSCRIPTION FACTOR PACC/RIM101"/>
    <property type="match status" value="1"/>
</dbReference>
<dbReference type="PANTHER" id="PTHR47257:SF1">
    <property type="entry name" value="PH-RESPONSE TRANSCRIPTION FACTOR PACC_RIM101"/>
    <property type="match status" value="1"/>
</dbReference>
<dbReference type="SMART" id="SM00355">
    <property type="entry name" value="ZnF_C2H2"/>
    <property type="match status" value="3"/>
</dbReference>
<dbReference type="SUPFAM" id="SSF57667">
    <property type="entry name" value="beta-beta-alpha zinc fingers"/>
    <property type="match status" value="2"/>
</dbReference>
<dbReference type="PROSITE" id="PS00028">
    <property type="entry name" value="ZINC_FINGER_C2H2_1"/>
    <property type="match status" value="2"/>
</dbReference>
<dbReference type="PROSITE" id="PS50157">
    <property type="entry name" value="ZINC_FINGER_C2H2_2"/>
    <property type="match status" value="3"/>
</dbReference>